<accession>Q1GYD2</accession>
<comment type="function">
    <text evidence="1">Allows the formation of correctly charged Asn-tRNA(Asn) or Gln-tRNA(Gln) through the transamidation of misacylated Asp-tRNA(Asn) or Glu-tRNA(Gln) in organisms which lack either or both of asparaginyl-tRNA or glutaminyl-tRNA synthetases. The reaction takes place in the presence of glutamine and ATP through an activated phospho-Asp-tRNA(Asn) or phospho-Glu-tRNA(Gln).</text>
</comment>
<comment type="catalytic activity">
    <reaction evidence="1">
        <text>L-glutamyl-tRNA(Gln) + L-glutamine + ATP + H2O = L-glutaminyl-tRNA(Gln) + L-glutamate + ADP + phosphate + H(+)</text>
        <dbReference type="Rhea" id="RHEA:17521"/>
        <dbReference type="Rhea" id="RHEA-COMP:9681"/>
        <dbReference type="Rhea" id="RHEA-COMP:9684"/>
        <dbReference type="ChEBI" id="CHEBI:15377"/>
        <dbReference type="ChEBI" id="CHEBI:15378"/>
        <dbReference type="ChEBI" id="CHEBI:29985"/>
        <dbReference type="ChEBI" id="CHEBI:30616"/>
        <dbReference type="ChEBI" id="CHEBI:43474"/>
        <dbReference type="ChEBI" id="CHEBI:58359"/>
        <dbReference type="ChEBI" id="CHEBI:78520"/>
        <dbReference type="ChEBI" id="CHEBI:78521"/>
        <dbReference type="ChEBI" id="CHEBI:456216"/>
    </reaction>
</comment>
<comment type="catalytic activity">
    <reaction evidence="1">
        <text>L-aspartyl-tRNA(Asn) + L-glutamine + ATP + H2O = L-asparaginyl-tRNA(Asn) + L-glutamate + ADP + phosphate + 2 H(+)</text>
        <dbReference type="Rhea" id="RHEA:14513"/>
        <dbReference type="Rhea" id="RHEA-COMP:9674"/>
        <dbReference type="Rhea" id="RHEA-COMP:9677"/>
        <dbReference type="ChEBI" id="CHEBI:15377"/>
        <dbReference type="ChEBI" id="CHEBI:15378"/>
        <dbReference type="ChEBI" id="CHEBI:29985"/>
        <dbReference type="ChEBI" id="CHEBI:30616"/>
        <dbReference type="ChEBI" id="CHEBI:43474"/>
        <dbReference type="ChEBI" id="CHEBI:58359"/>
        <dbReference type="ChEBI" id="CHEBI:78515"/>
        <dbReference type="ChEBI" id="CHEBI:78516"/>
        <dbReference type="ChEBI" id="CHEBI:456216"/>
    </reaction>
</comment>
<comment type="subunit">
    <text evidence="1">Heterotrimer of A, B and C subunits.</text>
</comment>
<comment type="similarity">
    <text evidence="1">Belongs to the GatC family.</text>
</comment>
<sequence length="95" mass="10419">MSLNTHDVKRIAHLARIAVSEEEAEATLVKLSGILGLIEEMQAVDTSGIVPMSHSQDVTQRLREDVVTESNQRDLLQSIAPAVENGLYLVPKVIE</sequence>
<feature type="chain" id="PRO_1000016146" description="Aspartyl/glutamyl-tRNA(Asn/Gln) amidotransferase subunit C">
    <location>
        <begin position="1"/>
        <end position="95"/>
    </location>
</feature>
<protein>
    <recommendedName>
        <fullName evidence="1">Aspartyl/glutamyl-tRNA(Asn/Gln) amidotransferase subunit C</fullName>
        <shortName evidence="1">Asp/Glu-ADT subunit C</shortName>
        <ecNumber evidence="1">6.3.5.-</ecNumber>
    </recommendedName>
</protein>
<proteinExistence type="inferred from homology"/>
<reference key="1">
    <citation type="submission" date="2006-03" db="EMBL/GenBank/DDBJ databases">
        <title>Complete sequence of Methylobacillus flagellatus KT.</title>
        <authorList>
            <consortium name="US DOE Joint Genome Institute"/>
            <person name="Copeland A."/>
            <person name="Lucas S."/>
            <person name="Lapidus A."/>
            <person name="Barry K."/>
            <person name="Detter J.C."/>
            <person name="Glavina del Rio T."/>
            <person name="Hammon N."/>
            <person name="Israni S."/>
            <person name="Dalin E."/>
            <person name="Tice H."/>
            <person name="Pitluck S."/>
            <person name="Brettin T."/>
            <person name="Bruce D."/>
            <person name="Han C."/>
            <person name="Tapia R."/>
            <person name="Saunders E."/>
            <person name="Gilna P."/>
            <person name="Schmutz J."/>
            <person name="Larimer F."/>
            <person name="Land M."/>
            <person name="Kyrpides N."/>
            <person name="Anderson I."/>
            <person name="Richardson P."/>
        </authorList>
    </citation>
    <scope>NUCLEOTIDE SEQUENCE [LARGE SCALE GENOMIC DNA]</scope>
    <source>
        <strain>ATCC 51484 / DSM 6875 / VKM B-1610 / KT</strain>
    </source>
</reference>
<dbReference type="EC" id="6.3.5.-" evidence="1"/>
<dbReference type="EMBL" id="CP000284">
    <property type="protein sequence ID" value="ABE50755.1"/>
    <property type="molecule type" value="Genomic_DNA"/>
</dbReference>
<dbReference type="RefSeq" id="WP_011480708.1">
    <property type="nucleotide sequence ID" value="NC_007947.1"/>
</dbReference>
<dbReference type="SMR" id="Q1GYD2"/>
<dbReference type="STRING" id="265072.Mfla_2490"/>
<dbReference type="KEGG" id="mfa:Mfla_2490"/>
<dbReference type="eggNOG" id="COG0721">
    <property type="taxonomic scope" value="Bacteria"/>
</dbReference>
<dbReference type="HOGENOM" id="CLU_105899_2_2_4"/>
<dbReference type="OrthoDB" id="9794326at2"/>
<dbReference type="Proteomes" id="UP000002440">
    <property type="component" value="Chromosome"/>
</dbReference>
<dbReference type="GO" id="GO:0050566">
    <property type="term" value="F:asparaginyl-tRNA synthase (glutamine-hydrolyzing) activity"/>
    <property type="evidence" value="ECO:0007669"/>
    <property type="project" value="RHEA"/>
</dbReference>
<dbReference type="GO" id="GO:0005524">
    <property type="term" value="F:ATP binding"/>
    <property type="evidence" value="ECO:0007669"/>
    <property type="project" value="UniProtKB-KW"/>
</dbReference>
<dbReference type="GO" id="GO:0050567">
    <property type="term" value="F:glutaminyl-tRNA synthase (glutamine-hydrolyzing) activity"/>
    <property type="evidence" value="ECO:0007669"/>
    <property type="project" value="UniProtKB-UniRule"/>
</dbReference>
<dbReference type="GO" id="GO:0070681">
    <property type="term" value="P:glutaminyl-tRNAGln biosynthesis via transamidation"/>
    <property type="evidence" value="ECO:0007669"/>
    <property type="project" value="TreeGrafter"/>
</dbReference>
<dbReference type="GO" id="GO:0006450">
    <property type="term" value="P:regulation of translational fidelity"/>
    <property type="evidence" value="ECO:0007669"/>
    <property type="project" value="InterPro"/>
</dbReference>
<dbReference type="GO" id="GO:0006412">
    <property type="term" value="P:translation"/>
    <property type="evidence" value="ECO:0007669"/>
    <property type="project" value="UniProtKB-UniRule"/>
</dbReference>
<dbReference type="Gene3D" id="1.10.20.60">
    <property type="entry name" value="Glu-tRNAGln amidotransferase C subunit, N-terminal domain"/>
    <property type="match status" value="1"/>
</dbReference>
<dbReference type="HAMAP" id="MF_00122">
    <property type="entry name" value="GatC"/>
    <property type="match status" value="1"/>
</dbReference>
<dbReference type="InterPro" id="IPR036113">
    <property type="entry name" value="Asp/Glu-ADT_sf_sub_c"/>
</dbReference>
<dbReference type="InterPro" id="IPR003837">
    <property type="entry name" value="GatC"/>
</dbReference>
<dbReference type="NCBIfam" id="TIGR00135">
    <property type="entry name" value="gatC"/>
    <property type="match status" value="1"/>
</dbReference>
<dbReference type="PANTHER" id="PTHR15004">
    <property type="entry name" value="GLUTAMYL-TRNA(GLN) AMIDOTRANSFERASE SUBUNIT C, MITOCHONDRIAL"/>
    <property type="match status" value="1"/>
</dbReference>
<dbReference type="PANTHER" id="PTHR15004:SF0">
    <property type="entry name" value="GLUTAMYL-TRNA(GLN) AMIDOTRANSFERASE SUBUNIT C, MITOCHONDRIAL"/>
    <property type="match status" value="1"/>
</dbReference>
<dbReference type="Pfam" id="PF02686">
    <property type="entry name" value="GatC"/>
    <property type="match status" value="1"/>
</dbReference>
<dbReference type="SUPFAM" id="SSF141000">
    <property type="entry name" value="Glu-tRNAGln amidotransferase C subunit"/>
    <property type="match status" value="1"/>
</dbReference>
<organism>
    <name type="scientific">Methylobacillus flagellatus (strain ATCC 51484 / DSM 6875 / VKM B-1610 / KT)</name>
    <dbReference type="NCBI Taxonomy" id="265072"/>
    <lineage>
        <taxon>Bacteria</taxon>
        <taxon>Pseudomonadati</taxon>
        <taxon>Pseudomonadota</taxon>
        <taxon>Betaproteobacteria</taxon>
        <taxon>Nitrosomonadales</taxon>
        <taxon>Methylophilaceae</taxon>
        <taxon>Methylobacillus</taxon>
    </lineage>
</organism>
<name>GATC_METFK</name>
<keyword id="KW-0067">ATP-binding</keyword>
<keyword id="KW-0436">Ligase</keyword>
<keyword id="KW-0547">Nucleotide-binding</keyword>
<keyword id="KW-0648">Protein biosynthesis</keyword>
<keyword id="KW-1185">Reference proteome</keyword>
<evidence type="ECO:0000255" key="1">
    <source>
        <dbReference type="HAMAP-Rule" id="MF_00122"/>
    </source>
</evidence>
<gene>
    <name evidence="1" type="primary">gatC</name>
    <name type="ordered locus">Mfla_2490</name>
</gene>